<proteinExistence type="inferred from homology"/>
<name>METK1_FRACC</name>
<dbReference type="EC" id="2.5.1.6" evidence="1"/>
<dbReference type="EMBL" id="CP000249">
    <property type="protein sequence ID" value="ABD12350.1"/>
    <property type="molecule type" value="Genomic_DNA"/>
</dbReference>
<dbReference type="SMR" id="Q2J8P2"/>
<dbReference type="STRING" id="106370.Francci3_2993"/>
<dbReference type="KEGG" id="fra:Francci3_2993"/>
<dbReference type="eggNOG" id="COG0192">
    <property type="taxonomic scope" value="Bacteria"/>
</dbReference>
<dbReference type="HOGENOM" id="CLU_041802_1_1_11"/>
<dbReference type="OrthoDB" id="9801686at2"/>
<dbReference type="PhylomeDB" id="Q2J8P2"/>
<dbReference type="UniPathway" id="UPA00315">
    <property type="reaction ID" value="UER00080"/>
</dbReference>
<dbReference type="Proteomes" id="UP000001937">
    <property type="component" value="Chromosome"/>
</dbReference>
<dbReference type="GO" id="GO:0005737">
    <property type="term" value="C:cytoplasm"/>
    <property type="evidence" value="ECO:0007669"/>
    <property type="project" value="UniProtKB-SubCell"/>
</dbReference>
<dbReference type="GO" id="GO:0005524">
    <property type="term" value="F:ATP binding"/>
    <property type="evidence" value="ECO:0007669"/>
    <property type="project" value="UniProtKB-UniRule"/>
</dbReference>
<dbReference type="GO" id="GO:0000287">
    <property type="term" value="F:magnesium ion binding"/>
    <property type="evidence" value="ECO:0007669"/>
    <property type="project" value="UniProtKB-UniRule"/>
</dbReference>
<dbReference type="GO" id="GO:0004478">
    <property type="term" value="F:methionine adenosyltransferase activity"/>
    <property type="evidence" value="ECO:0007669"/>
    <property type="project" value="UniProtKB-UniRule"/>
</dbReference>
<dbReference type="GO" id="GO:0006730">
    <property type="term" value="P:one-carbon metabolic process"/>
    <property type="evidence" value="ECO:0007669"/>
    <property type="project" value="UniProtKB-KW"/>
</dbReference>
<dbReference type="GO" id="GO:0006556">
    <property type="term" value="P:S-adenosylmethionine biosynthetic process"/>
    <property type="evidence" value="ECO:0007669"/>
    <property type="project" value="UniProtKB-UniRule"/>
</dbReference>
<dbReference type="CDD" id="cd18079">
    <property type="entry name" value="S-AdoMet_synt"/>
    <property type="match status" value="1"/>
</dbReference>
<dbReference type="FunFam" id="3.30.300.10:FF:000006">
    <property type="entry name" value="S-adenosylmethionine synthase"/>
    <property type="match status" value="1"/>
</dbReference>
<dbReference type="Gene3D" id="3.30.300.10">
    <property type="match status" value="3"/>
</dbReference>
<dbReference type="HAMAP" id="MF_00086">
    <property type="entry name" value="S_AdoMet_synth1"/>
    <property type="match status" value="1"/>
</dbReference>
<dbReference type="InterPro" id="IPR022631">
    <property type="entry name" value="ADOMET_SYNTHASE_CS"/>
</dbReference>
<dbReference type="InterPro" id="IPR022630">
    <property type="entry name" value="S-AdoMet_synt_C"/>
</dbReference>
<dbReference type="InterPro" id="IPR022629">
    <property type="entry name" value="S-AdoMet_synt_central"/>
</dbReference>
<dbReference type="InterPro" id="IPR022628">
    <property type="entry name" value="S-AdoMet_synt_N"/>
</dbReference>
<dbReference type="InterPro" id="IPR002133">
    <property type="entry name" value="S-AdoMet_synthetase"/>
</dbReference>
<dbReference type="InterPro" id="IPR022636">
    <property type="entry name" value="S-AdoMet_synthetase_sfam"/>
</dbReference>
<dbReference type="NCBIfam" id="TIGR01034">
    <property type="entry name" value="metK"/>
    <property type="match status" value="1"/>
</dbReference>
<dbReference type="PANTHER" id="PTHR11964">
    <property type="entry name" value="S-ADENOSYLMETHIONINE SYNTHETASE"/>
    <property type="match status" value="1"/>
</dbReference>
<dbReference type="Pfam" id="PF02773">
    <property type="entry name" value="S-AdoMet_synt_C"/>
    <property type="match status" value="1"/>
</dbReference>
<dbReference type="Pfam" id="PF02772">
    <property type="entry name" value="S-AdoMet_synt_M"/>
    <property type="match status" value="1"/>
</dbReference>
<dbReference type="Pfam" id="PF00438">
    <property type="entry name" value="S-AdoMet_synt_N"/>
    <property type="match status" value="1"/>
</dbReference>
<dbReference type="PIRSF" id="PIRSF000497">
    <property type="entry name" value="MAT"/>
    <property type="match status" value="1"/>
</dbReference>
<dbReference type="SUPFAM" id="SSF55973">
    <property type="entry name" value="S-adenosylmethionine synthetase"/>
    <property type="match status" value="3"/>
</dbReference>
<dbReference type="PROSITE" id="PS00376">
    <property type="entry name" value="ADOMET_SYNTHASE_1"/>
    <property type="match status" value="1"/>
</dbReference>
<dbReference type="PROSITE" id="PS00377">
    <property type="entry name" value="ADOMET_SYNTHASE_2"/>
    <property type="match status" value="1"/>
</dbReference>
<accession>Q2J8P2</accession>
<protein>
    <recommendedName>
        <fullName evidence="1">S-adenosylmethionine synthase 1</fullName>
        <shortName evidence="1">AdoMet synthase 1</shortName>
        <ecNumber evidence="1">2.5.1.6</ecNumber>
    </recommendedName>
    <alternativeName>
        <fullName evidence="1">MAT 1</fullName>
    </alternativeName>
    <alternativeName>
        <fullName evidence="1">Methionine adenosyltransferase 1</fullName>
    </alternativeName>
</protein>
<evidence type="ECO:0000255" key="1">
    <source>
        <dbReference type="HAMAP-Rule" id="MF_00086"/>
    </source>
</evidence>
<reference key="1">
    <citation type="journal article" date="2007" name="Genome Res.">
        <title>Genome characteristics of facultatively symbiotic Frankia sp. strains reflect host range and host plant biogeography.</title>
        <authorList>
            <person name="Normand P."/>
            <person name="Lapierre P."/>
            <person name="Tisa L.S."/>
            <person name="Gogarten J.P."/>
            <person name="Alloisio N."/>
            <person name="Bagnarol E."/>
            <person name="Bassi C.A."/>
            <person name="Berry A.M."/>
            <person name="Bickhart D.M."/>
            <person name="Choisne N."/>
            <person name="Couloux A."/>
            <person name="Cournoyer B."/>
            <person name="Cruveiller S."/>
            <person name="Daubin V."/>
            <person name="Demange N."/>
            <person name="Francino M.P."/>
            <person name="Goltsman E."/>
            <person name="Huang Y."/>
            <person name="Kopp O.R."/>
            <person name="Labarre L."/>
            <person name="Lapidus A."/>
            <person name="Lavire C."/>
            <person name="Marechal J."/>
            <person name="Martinez M."/>
            <person name="Mastronunzio J.E."/>
            <person name="Mullin B.C."/>
            <person name="Niemann J."/>
            <person name="Pujic P."/>
            <person name="Rawnsley T."/>
            <person name="Rouy Z."/>
            <person name="Schenowitz C."/>
            <person name="Sellstedt A."/>
            <person name="Tavares F."/>
            <person name="Tomkins J.P."/>
            <person name="Vallenet D."/>
            <person name="Valverde C."/>
            <person name="Wall L.G."/>
            <person name="Wang Y."/>
            <person name="Medigue C."/>
            <person name="Benson D.R."/>
        </authorList>
    </citation>
    <scope>NUCLEOTIDE SEQUENCE [LARGE SCALE GENOMIC DNA]</scope>
    <source>
        <strain>DSM 45818 / CECT 9043 / HFP020203 / CcI3</strain>
    </source>
</reference>
<organism>
    <name type="scientific">Frankia casuarinae (strain DSM 45818 / CECT 9043 / HFP020203 / CcI3)</name>
    <dbReference type="NCBI Taxonomy" id="106370"/>
    <lineage>
        <taxon>Bacteria</taxon>
        <taxon>Bacillati</taxon>
        <taxon>Actinomycetota</taxon>
        <taxon>Actinomycetes</taxon>
        <taxon>Frankiales</taxon>
        <taxon>Frankiaceae</taxon>
        <taxon>Frankia</taxon>
    </lineage>
</organism>
<sequence length="401" mass="42893">MSRRLFTSESVTEGHPDKLADQISDALLDAFLAGDPTSRVAVETLLTTGHVHVAGEVTSSAHVDVTAVVRRTLTDIGYDAATGFDGATVGVLVSIGAQSPDIAQGVDKAYEARVEGGEDTLAQQGAGDQGIMFGYATDETPDLLPLPITLAHRLAQRLSKVRHDGLLPYLRPDGKTQVTIEYDGDRPVRLDTVVVSAHHAADVDLATRLVPDIRDQVIAPELKRLAEENLGLEVDGYRLLVNPTGRFEIGGPIGDAGLTGRKIIIDTYGGYARHGGGAFSGKDPSKVDRSAAYALRWVAKNVVAAGLARRAELQVAYAIGKAEPVGLFVETFGTETVPVPEIARAVSEVFDLRPAAIIRDLDLLRPIYGQTASYGHFGRTLPDFTWERTDRADALRAAVGR</sequence>
<keyword id="KW-0067">ATP-binding</keyword>
<keyword id="KW-0963">Cytoplasm</keyword>
<keyword id="KW-0460">Magnesium</keyword>
<keyword id="KW-0479">Metal-binding</keyword>
<keyword id="KW-0547">Nucleotide-binding</keyword>
<keyword id="KW-0554">One-carbon metabolism</keyword>
<keyword id="KW-0630">Potassium</keyword>
<keyword id="KW-1185">Reference proteome</keyword>
<keyword id="KW-0808">Transferase</keyword>
<feature type="chain" id="PRO_0000240995" description="S-adenosylmethionine synthase 1">
    <location>
        <begin position="1"/>
        <end position="401"/>
    </location>
</feature>
<feature type="region of interest" description="Flexible loop" evidence="1">
    <location>
        <begin position="98"/>
        <end position="108"/>
    </location>
</feature>
<feature type="binding site" description="in other chain" evidence="1">
    <location>
        <position position="15"/>
    </location>
    <ligand>
        <name>ATP</name>
        <dbReference type="ChEBI" id="CHEBI:30616"/>
        <note>ligand shared between two neighboring subunits</note>
    </ligand>
</feature>
<feature type="binding site" evidence="1">
    <location>
        <position position="17"/>
    </location>
    <ligand>
        <name>Mg(2+)</name>
        <dbReference type="ChEBI" id="CHEBI:18420"/>
    </ligand>
</feature>
<feature type="binding site" evidence="1">
    <location>
        <position position="43"/>
    </location>
    <ligand>
        <name>K(+)</name>
        <dbReference type="ChEBI" id="CHEBI:29103"/>
    </ligand>
</feature>
<feature type="binding site" description="in other chain" evidence="1">
    <location>
        <position position="56"/>
    </location>
    <ligand>
        <name>L-methionine</name>
        <dbReference type="ChEBI" id="CHEBI:57844"/>
        <note>ligand shared between two neighboring subunits</note>
    </ligand>
</feature>
<feature type="binding site" description="in other chain" evidence="1">
    <location>
        <position position="98"/>
    </location>
    <ligand>
        <name>L-methionine</name>
        <dbReference type="ChEBI" id="CHEBI:57844"/>
        <note>ligand shared between two neighboring subunits</note>
    </ligand>
</feature>
<feature type="binding site" description="in other chain" evidence="1">
    <location>
        <begin position="173"/>
        <end position="175"/>
    </location>
    <ligand>
        <name>ATP</name>
        <dbReference type="ChEBI" id="CHEBI:30616"/>
        <note>ligand shared between two neighboring subunits</note>
    </ligand>
</feature>
<feature type="binding site" description="in other chain" evidence="1">
    <location>
        <begin position="246"/>
        <end position="247"/>
    </location>
    <ligand>
        <name>ATP</name>
        <dbReference type="ChEBI" id="CHEBI:30616"/>
        <note>ligand shared between two neighboring subunits</note>
    </ligand>
</feature>
<feature type="binding site" evidence="1">
    <location>
        <position position="255"/>
    </location>
    <ligand>
        <name>ATP</name>
        <dbReference type="ChEBI" id="CHEBI:30616"/>
        <note>ligand shared between two neighboring subunits</note>
    </ligand>
</feature>
<feature type="binding site" evidence="1">
    <location>
        <position position="255"/>
    </location>
    <ligand>
        <name>L-methionine</name>
        <dbReference type="ChEBI" id="CHEBI:57844"/>
        <note>ligand shared between two neighboring subunits</note>
    </ligand>
</feature>
<feature type="binding site" description="in other chain" evidence="1">
    <location>
        <begin position="261"/>
        <end position="262"/>
    </location>
    <ligand>
        <name>ATP</name>
        <dbReference type="ChEBI" id="CHEBI:30616"/>
        <note>ligand shared between two neighboring subunits</note>
    </ligand>
</feature>
<feature type="binding site" evidence="1">
    <location>
        <position position="278"/>
    </location>
    <ligand>
        <name>ATP</name>
        <dbReference type="ChEBI" id="CHEBI:30616"/>
        <note>ligand shared between two neighboring subunits</note>
    </ligand>
</feature>
<feature type="binding site" evidence="1">
    <location>
        <position position="282"/>
    </location>
    <ligand>
        <name>ATP</name>
        <dbReference type="ChEBI" id="CHEBI:30616"/>
        <note>ligand shared between two neighboring subunits</note>
    </ligand>
</feature>
<feature type="binding site" description="in other chain" evidence="1">
    <location>
        <position position="286"/>
    </location>
    <ligand>
        <name>L-methionine</name>
        <dbReference type="ChEBI" id="CHEBI:57844"/>
        <note>ligand shared between two neighboring subunits</note>
    </ligand>
</feature>
<gene>
    <name evidence="1" type="primary">metK1</name>
    <name type="ordered locus">Francci3_2993</name>
</gene>
<comment type="function">
    <text evidence="1">Catalyzes the formation of S-adenosylmethionine (AdoMet) from methionine and ATP. The overall synthetic reaction is composed of two sequential steps, AdoMet formation and the subsequent tripolyphosphate hydrolysis which occurs prior to release of AdoMet from the enzyme.</text>
</comment>
<comment type="catalytic activity">
    <reaction evidence="1">
        <text>L-methionine + ATP + H2O = S-adenosyl-L-methionine + phosphate + diphosphate</text>
        <dbReference type="Rhea" id="RHEA:21080"/>
        <dbReference type="ChEBI" id="CHEBI:15377"/>
        <dbReference type="ChEBI" id="CHEBI:30616"/>
        <dbReference type="ChEBI" id="CHEBI:33019"/>
        <dbReference type="ChEBI" id="CHEBI:43474"/>
        <dbReference type="ChEBI" id="CHEBI:57844"/>
        <dbReference type="ChEBI" id="CHEBI:59789"/>
        <dbReference type="EC" id="2.5.1.6"/>
    </reaction>
</comment>
<comment type="cofactor">
    <cofactor evidence="1">
        <name>Mg(2+)</name>
        <dbReference type="ChEBI" id="CHEBI:18420"/>
    </cofactor>
    <text evidence="1">Binds 2 divalent ions per subunit.</text>
</comment>
<comment type="cofactor">
    <cofactor evidence="1">
        <name>K(+)</name>
        <dbReference type="ChEBI" id="CHEBI:29103"/>
    </cofactor>
    <text evidence="1">Binds 1 potassium ion per subunit.</text>
</comment>
<comment type="pathway">
    <text evidence="1">Amino-acid biosynthesis; S-adenosyl-L-methionine biosynthesis; S-adenosyl-L-methionine from L-methionine: step 1/1.</text>
</comment>
<comment type="subunit">
    <text evidence="1">Homotetramer; dimer of dimers.</text>
</comment>
<comment type="subcellular location">
    <subcellularLocation>
        <location evidence="1">Cytoplasm</location>
    </subcellularLocation>
</comment>
<comment type="similarity">
    <text evidence="1">Belongs to the AdoMet synthase family.</text>
</comment>